<sequence length="293" mass="32112">MPELPEVETVRLGLQPAMEGARFDTVALRRADLRFPFQPDFTDRLTGQTVTGLSRRAKYLLADLSSGDALLMHLGMSGSFRVIEPGGEATPGDFHHPRSEDRSHDHVVFSMSSGKTVVFNDPRRFGYMKLFRRAAIEDEPFLKGLGPEPLGNAFDASMLARACAGKKTSLKAALLDQRVVAGLGNIYVCEALFRAHLSPKRLAATLATKAGGPTERAEKLVEAIRTVLHEAIQAGGSSLRDHRQTSGELGYFQHSFAVYDRESEPCRTKGCGGVVKRFVQNGRSTFCCPKCQK</sequence>
<proteinExistence type="inferred from homology"/>
<keyword id="KW-0227">DNA damage</keyword>
<keyword id="KW-0234">DNA repair</keyword>
<keyword id="KW-0238">DNA-binding</keyword>
<keyword id="KW-0326">Glycosidase</keyword>
<keyword id="KW-0378">Hydrolase</keyword>
<keyword id="KW-0456">Lyase</keyword>
<keyword id="KW-0479">Metal-binding</keyword>
<keyword id="KW-0511">Multifunctional enzyme</keyword>
<keyword id="KW-0862">Zinc</keyword>
<keyword id="KW-0863">Zinc-finger</keyword>
<organism>
    <name type="scientific">Rhodopseudomonas palustris (strain BisA53)</name>
    <dbReference type="NCBI Taxonomy" id="316055"/>
    <lineage>
        <taxon>Bacteria</taxon>
        <taxon>Pseudomonadati</taxon>
        <taxon>Pseudomonadota</taxon>
        <taxon>Alphaproteobacteria</taxon>
        <taxon>Hyphomicrobiales</taxon>
        <taxon>Nitrobacteraceae</taxon>
        <taxon>Rhodopseudomonas</taxon>
    </lineage>
</organism>
<reference key="1">
    <citation type="submission" date="2006-09" db="EMBL/GenBank/DDBJ databases">
        <title>Complete sequence of Rhodopseudomonas palustris BisA53.</title>
        <authorList>
            <consortium name="US DOE Joint Genome Institute"/>
            <person name="Copeland A."/>
            <person name="Lucas S."/>
            <person name="Lapidus A."/>
            <person name="Barry K."/>
            <person name="Detter J.C."/>
            <person name="Glavina del Rio T."/>
            <person name="Hammon N."/>
            <person name="Israni S."/>
            <person name="Dalin E."/>
            <person name="Tice H."/>
            <person name="Pitluck S."/>
            <person name="Chain P."/>
            <person name="Malfatti S."/>
            <person name="Shin M."/>
            <person name="Vergez L."/>
            <person name="Schmutz J."/>
            <person name="Larimer F."/>
            <person name="Land M."/>
            <person name="Hauser L."/>
            <person name="Pelletier D.A."/>
            <person name="Kyrpides N."/>
            <person name="Kim E."/>
            <person name="Harwood C.S."/>
            <person name="Oda Y."/>
            <person name="Richardson P."/>
        </authorList>
    </citation>
    <scope>NUCLEOTIDE SEQUENCE [LARGE SCALE GENOMIC DNA]</scope>
    <source>
        <strain>BisA53</strain>
    </source>
</reference>
<accession>Q07UF4</accession>
<feature type="initiator methionine" description="Removed" evidence="1">
    <location>
        <position position="1"/>
    </location>
</feature>
<feature type="chain" id="PRO_1000008754" description="Formamidopyrimidine-DNA glycosylase">
    <location>
        <begin position="2"/>
        <end position="293"/>
    </location>
</feature>
<feature type="zinc finger region" description="FPG-type" evidence="2">
    <location>
        <begin position="257"/>
        <end position="293"/>
    </location>
</feature>
<feature type="active site" description="Schiff-base intermediate with DNA" evidence="2">
    <location>
        <position position="2"/>
    </location>
</feature>
<feature type="active site" description="Proton donor" evidence="2">
    <location>
        <position position="3"/>
    </location>
</feature>
<feature type="active site" description="Proton donor; for beta-elimination activity" evidence="2">
    <location>
        <position position="58"/>
    </location>
</feature>
<feature type="active site" description="Proton donor; for delta-elimination activity" evidence="2">
    <location>
        <position position="283"/>
    </location>
</feature>
<feature type="binding site" evidence="2">
    <location>
        <position position="104"/>
    </location>
    <ligand>
        <name>DNA</name>
        <dbReference type="ChEBI" id="CHEBI:16991"/>
    </ligand>
</feature>
<feature type="binding site" evidence="2">
    <location>
        <position position="123"/>
    </location>
    <ligand>
        <name>DNA</name>
        <dbReference type="ChEBI" id="CHEBI:16991"/>
    </ligand>
</feature>
<feature type="binding site" evidence="2">
    <location>
        <position position="166"/>
    </location>
    <ligand>
        <name>DNA</name>
        <dbReference type="ChEBI" id="CHEBI:16991"/>
    </ligand>
</feature>
<name>FPG_RHOP5</name>
<evidence type="ECO:0000250" key="1"/>
<evidence type="ECO:0000255" key="2">
    <source>
        <dbReference type="HAMAP-Rule" id="MF_00103"/>
    </source>
</evidence>
<comment type="function">
    <text evidence="2">Involved in base excision repair of DNA damaged by oxidation or by mutagenic agents. Acts as a DNA glycosylase that recognizes and removes damaged bases. Has a preference for oxidized purines, such as 7,8-dihydro-8-oxoguanine (8-oxoG). Has AP (apurinic/apyrimidinic) lyase activity and introduces nicks in the DNA strand. Cleaves the DNA backbone by beta-delta elimination to generate a single-strand break at the site of the removed base with both 3'- and 5'-phosphates.</text>
</comment>
<comment type="catalytic activity">
    <reaction evidence="2">
        <text>Hydrolysis of DNA containing ring-opened 7-methylguanine residues, releasing 2,6-diamino-4-hydroxy-5-(N-methyl)formamidopyrimidine.</text>
        <dbReference type="EC" id="3.2.2.23"/>
    </reaction>
</comment>
<comment type="catalytic activity">
    <reaction evidence="2">
        <text>2'-deoxyribonucleotide-(2'-deoxyribose 5'-phosphate)-2'-deoxyribonucleotide-DNA = a 3'-end 2'-deoxyribonucleotide-(2,3-dehydro-2,3-deoxyribose 5'-phosphate)-DNA + a 5'-end 5'-phospho-2'-deoxyribonucleoside-DNA + H(+)</text>
        <dbReference type="Rhea" id="RHEA:66592"/>
        <dbReference type="Rhea" id="RHEA-COMP:13180"/>
        <dbReference type="Rhea" id="RHEA-COMP:16897"/>
        <dbReference type="Rhea" id="RHEA-COMP:17067"/>
        <dbReference type="ChEBI" id="CHEBI:15378"/>
        <dbReference type="ChEBI" id="CHEBI:136412"/>
        <dbReference type="ChEBI" id="CHEBI:157695"/>
        <dbReference type="ChEBI" id="CHEBI:167181"/>
        <dbReference type="EC" id="4.2.99.18"/>
    </reaction>
</comment>
<comment type="cofactor">
    <cofactor evidence="2">
        <name>Zn(2+)</name>
        <dbReference type="ChEBI" id="CHEBI:29105"/>
    </cofactor>
    <text evidence="2">Binds 1 zinc ion per subunit.</text>
</comment>
<comment type="subunit">
    <text evidence="2">Monomer.</text>
</comment>
<comment type="similarity">
    <text evidence="2">Belongs to the FPG family.</text>
</comment>
<gene>
    <name evidence="2" type="primary">mutM</name>
    <name evidence="2" type="synonym">fpg</name>
    <name type="ordered locus">RPE_0471</name>
</gene>
<protein>
    <recommendedName>
        <fullName evidence="2">Formamidopyrimidine-DNA glycosylase</fullName>
        <shortName evidence="2">Fapy-DNA glycosylase</shortName>
        <ecNumber evidence="2">3.2.2.23</ecNumber>
    </recommendedName>
    <alternativeName>
        <fullName evidence="2">DNA-(apurinic or apyrimidinic site) lyase MutM</fullName>
        <shortName evidence="2">AP lyase MutM</shortName>
        <ecNumber evidence="2">4.2.99.18</ecNumber>
    </alternativeName>
</protein>
<dbReference type="EC" id="3.2.2.23" evidence="2"/>
<dbReference type="EC" id="4.2.99.18" evidence="2"/>
<dbReference type="EMBL" id="CP000463">
    <property type="protein sequence ID" value="ABJ04430.1"/>
    <property type="molecule type" value="Genomic_DNA"/>
</dbReference>
<dbReference type="SMR" id="Q07UF4"/>
<dbReference type="STRING" id="316055.RPE_0471"/>
<dbReference type="KEGG" id="rpe:RPE_0471"/>
<dbReference type="eggNOG" id="COG0266">
    <property type="taxonomic scope" value="Bacteria"/>
</dbReference>
<dbReference type="HOGENOM" id="CLU_038423_1_1_5"/>
<dbReference type="OrthoDB" id="9800855at2"/>
<dbReference type="GO" id="GO:0034039">
    <property type="term" value="F:8-oxo-7,8-dihydroguanine DNA N-glycosylase activity"/>
    <property type="evidence" value="ECO:0007669"/>
    <property type="project" value="TreeGrafter"/>
</dbReference>
<dbReference type="GO" id="GO:0140078">
    <property type="term" value="F:class I DNA-(apurinic or apyrimidinic site) endonuclease activity"/>
    <property type="evidence" value="ECO:0007669"/>
    <property type="project" value="UniProtKB-EC"/>
</dbReference>
<dbReference type="GO" id="GO:0003684">
    <property type="term" value="F:damaged DNA binding"/>
    <property type="evidence" value="ECO:0007669"/>
    <property type="project" value="InterPro"/>
</dbReference>
<dbReference type="GO" id="GO:0008270">
    <property type="term" value="F:zinc ion binding"/>
    <property type="evidence" value="ECO:0007669"/>
    <property type="project" value="UniProtKB-UniRule"/>
</dbReference>
<dbReference type="GO" id="GO:0006284">
    <property type="term" value="P:base-excision repair"/>
    <property type="evidence" value="ECO:0007669"/>
    <property type="project" value="InterPro"/>
</dbReference>
<dbReference type="CDD" id="cd20335">
    <property type="entry name" value="BRcat_RBR"/>
    <property type="match status" value="1"/>
</dbReference>
<dbReference type="CDD" id="cd08966">
    <property type="entry name" value="EcFpg-like_N"/>
    <property type="match status" value="1"/>
</dbReference>
<dbReference type="FunFam" id="1.10.8.50:FF:000003">
    <property type="entry name" value="Formamidopyrimidine-DNA glycosylase"/>
    <property type="match status" value="1"/>
</dbReference>
<dbReference type="FunFam" id="3.20.190.10:FF:000001">
    <property type="entry name" value="Formamidopyrimidine-DNA glycosylase"/>
    <property type="match status" value="1"/>
</dbReference>
<dbReference type="Gene3D" id="1.10.8.50">
    <property type="match status" value="1"/>
</dbReference>
<dbReference type="Gene3D" id="3.20.190.10">
    <property type="entry name" value="MutM-like, N-terminal"/>
    <property type="match status" value="1"/>
</dbReference>
<dbReference type="HAMAP" id="MF_00103">
    <property type="entry name" value="Fapy_DNA_glycosyl"/>
    <property type="match status" value="1"/>
</dbReference>
<dbReference type="InterPro" id="IPR015886">
    <property type="entry name" value="DNA_glyclase/AP_lyase_DNA-bd"/>
</dbReference>
<dbReference type="InterPro" id="IPR020629">
    <property type="entry name" value="Formamido-pyr_DNA_Glyclase"/>
</dbReference>
<dbReference type="InterPro" id="IPR012319">
    <property type="entry name" value="FPG_cat"/>
</dbReference>
<dbReference type="InterPro" id="IPR035937">
    <property type="entry name" value="MutM-like_N-ter"/>
</dbReference>
<dbReference type="InterPro" id="IPR010979">
    <property type="entry name" value="Ribosomal_uS13-like_H2TH"/>
</dbReference>
<dbReference type="InterPro" id="IPR000214">
    <property type="entry name" value="Znf_DNA_glyclase/AP_lyase"/>
</dbReference>
<dbReference type="NCBIfam" id="TIGR00577">
    <property type="entry name" value="fpg"/>
    <property type="match status" value="1"/>
</dbReference>
<dbReference type="NCBIfam" id="NF002211">
    <property type="entry name" value="PRK01103.1"/>
    <property type="match status" value="1"/>
</dbReference>
<dbReference type="PANTHER" id="PTHR22993">
    <property type="entry name" value="FORMAMIDOPYRIMIDINE-DNA GLYCOSYLASE"/>
    <property type="match status" value="1"/>
</dbReference>
<dbReference type="PANTHER" id="PTHR22993:SF9">
    <property type="entry name" value="FORMAMIDOPYRIMIDINE-DNA GLYCOSYLASE"/>
    <property type="match status" value="1"/>
</dbReference>
<dbReference type="Pfam" id="PF01149">
    <property type="entry name" value="Fapy_DNA_glyco"/>
    <property type="match status" value="1"/>
</dbReference>
<dbReference type="Pfam" id="PF06831">
    <property type="entry name" value="H2TH"/>
    <property type="match status" value="1"/>
</dbReference>
<dbReference type="SMART" id="SM00898">
    <property type="entry name" value="Fapy_DNA_glyco"/>
    <property type="match status" value="1"/>
</dbReference>
<dbReference type="SMART" id="SM01232">
    <property type="entry name" value="H2TH"/>
    <property type="match status" value="1"/>
</dbReference>
<dbReference type="SUPFAM" id="SSF57716">
    <property type="entry name" value="Glucocorticoid receptor-like (DNA-binding domain)"/>
    <property type="match status" value="1"/>
</dbReference>
<dbReference type="SUPFAM" id="SSF81624">
    <property type="entry name" value="N-terminal domain of MutM-like DNA repair proteins"/>
    <property type="match status" value="1"/>
</dbReference>
<dbReference type="SUPFAM" id="SSF46946">
    <property type="entry name" value="S13-like H2TH domain"/>
    <property type="match status" value="1"/>
</dbReference>
<dbReference type="PROSITE" id="PS51068">
    <property type="entry name" value="FPG_CAT"/>
    <property type="match status" value="1"/>
</dbReference>
<dbReference type="PROSITE" id="PS51066">
    <property type="entry name" value="ZF_FPG_2"/>
    <property type="match status" value="1"/>
</dbReference>